<feature type="initiator methionine" description="Removed" evidence="1">
    <location>
        <position position="1"/>
    </location>
</feature>
<feature type="chain" id="PRO_0000337236" description="D-dopachrome decarboxylase-B">
    <location>
        <begin position="2"/>
        <end position="118"/>
    </location>
</feature>
<feature type="modified residue" description="N-acetylproline" evidence="1">
    <location>
        <position position="2"/>
    </location>
</feature>
<proteinExistence type="inferred from homology"/>
<gene>
    <name type="primary">ddt-b</name>
</gene>
<protein>
    <recommendedName>
        <fullName>D-dopachrome decarboxylase-B</fullName>
        <ecNumber>4.1.1.84</ecNumber>
    </recommendedName>
    <alternativeName>
        <fullName>D-dopachrome tautomerase-B</fullName>
    </alternativeName>
</protein>
<organism>
    <name type="scientific">Xenopus laevis</name>
    <name type="common">African clawed frog</name>
    <dbReference type="NCBI Taxonomy" id="8355"/>
    <lineage>
        <taxon>Eukaryota</taxon>
        <taxon>Metazoa</taxon>
        <taxon>Chordata</taxon>
        <taxon>Craniata</taxon>
        <taxon>Vertebrata</taxon>
        <taxon>Euteleostomi</taxon>
        <taxon>Amphibia</taxon>
        <taxon>Batrachia</taxon>
        <taxon>Anura</taxon>
        <taxon>Pipoidea</taxon>
        <taxon>Pipidae</taxon>
        <taxon>Xenopodinae</taxon>
        <taxon>Xenopus</taxon>
        <taxon>Xenopus</taxon>
    </lineage>
</organism>
<reference key="1">
    <citation type="submission" date="2004-09" db="EMBL/GenBank/DDBJ databases">
        <authorList>
            <consortium name="NIH - Xenopus Gene Collection (XGC) project"/>
        </authorList>
    </citation>
    <scope>NUCLEOTIDE SEQUENCE [LARGE SCALE MRNA]</scope>
    <source>
        <tissue>Kidney</tissue>
    </source>
</reference>
<sequence length="118" mass="12902">MPFVELDTNLQQQEVPQDLAEKLCSATATILGKPRERVNVTVRTGVSMVVGGSSAPCTQLIISSIGVVGTAEQNKEHSAKFFNFLTEQLGLAQDRILLRFVPLEPWQIGKNGTVMTFL</sequence>
<keyword id="KW-0007">Acetylation</keyword>
<keyword id="KW-0963">Cytoplasm</keyword>
<keyword id="KW-0456">Lyase</keyword>
<keyword id="KW-0470">Melanin biosynthesis</keyword>
<keyword id="KW-1185">Reference proteome</keyword>
<name>DOPDB_XENLA</name>
<accession>Q640C5</accession>
<comment type="function">
    <text evidence="1">Tautomerization of D-dopachrome with decarboxylation to give 5,6-dihydroxyindole (DHI).</text>
</comment>
<comment type="catalytic activity">
    <reaction>
        <text>D-dopachrome + H(+) = 5,6-dihydroxyindole + CO2</text>
        <dbReference type="Rhea" id="RHEA:18441"/>
        <dbReference type="ChEBI" id="CHEBI:15378"/>
        <dbReference type="ChEBI" id="CHEBI:16526"/>
        <dbReference type="ChEBI" id="CHEBI:27404"/>
        <dbReference type="ChEBI" id="CHEBI:58782"/>
        <dbReference type="EC" id="4.1.1.84"/>
    </reaction>
</comment>
<comment type="subunit">
    <text evidence="1">Homotrimer.</text>
</comment>
<comment type="subcellular location">
    <subcellularLocation>
        <location evidence="1">Cytoplasm</location>
    </subcellularLocation>
</comment>
<comment type="similarity">
    <text evidence="2">Belongs to the MIF family.</text>
</comment>
<dbReference type="EC" id="4.1.1.84"/>
<dbReference type="EMBL" id="BC082705">
    <property type="protein sequence ID" value="AAH82705.1"/>
    <property type="molecule type" value="mRNA"/>
</dbReference>
<dbReference type="RefSeq" id="NP_001088035.1">
    <property type="nucleotide sequence ID" value="NM_001094566.1"/>
</dbReference>
<dbReference type="SMR" id="Q640C5"/>
<dbReference type="DNASU" id="494727"/>
<dbReference type="GeneID" id="494727"/>
<dbReference type="KEGG" id="xla:494727"/>
<dbReference type="AGR" id="Xenbase:XB-GENE-6255328"/>
<dbReference type="CTD" id="494727"/>
<dbReference type="Xenbase" id="XB-GENE-6255328">
    <property type="gene designation" value="ddt.L"/>
</dbReference>
<dbReference type="OMA" id="MARCISE"/>
<dbReference type="OrthoDB" id="6080988at2759"/>
<dbReference type="Proteomes" id="UP000186698">
    <property type="component" value="Chromosome 1L"/>
</dbReference>
<dbReference type="Bgee" id="494727">
    <property type="expression patterns" value="Expressed in stomach and 19 other cell types or tissues"/>
</dbReference>
<dbReference type="GO" id="GO:0005737">
    <property type="term" value="C:cytoplasm"/>
    <property type="evidence" value="ECO:0007669"/>
    <property type="project" value="UniProtKB-SubCell"/>
</dbReference>
<dbReference type="GO" id="GO:0005615">
    <property type="term" value="C:extracellular space"/>
    <property type="evidence" value="ECO:0000318"/>
    <property type="project" value="GO_Central"/>
</dbReference>
<dbReference type="GO" id="GO:0033981">
    <property type="term" value="F:D-dopachrome decarboxylase activity"/>
    <property type="evidence" value="ECO:0007669"/>
    <property type="project" value="UniProtKB-EC"/>
</dbReference>
<dbReference type="GO" id="GO:0050178">
    <property type="term" value="F:phenylpyruvate tautomerase activity"/>
    <property type="evidence" value="ECO:0000318"/>
    <property type="project" value="GO_Central"/>
</dbReference>
<dbReference type="GO" id="GO:0042438">
    <property type="term" value="P:melanin biosynthetic process"/>
    <property type="evidence" value="ECO:0007669"/>
    <property type="project" value="UniProtKB-KW"/>
</dbReference>
<dbReference type="Gene3D" id="3.30.429.10">
    <property type="entry name" value="Macrophage Migration Inhibitory Factor"/>
    <property type="match status" value="1"/>
</dbReference>
<dbReference type="InterPro" id="IPR001398">
    <property type="entry name" value="Macrophage_inhib_fac"/>
</dbReference>
<dbReference type="InterPro" id="IPR014347">
    <property type="entry name" value="Tautomerase/MIF_sf"/>
</dbReference>
<dbReference type="PANTHER" id="PTHR11954">
    <property type="entry name" value="D-DOPACHROME DECARBOXYLASE"/>
    <property type="match status" value="1"/>
</dbReference>
<dbReference type="PANTHER" id="PTHR11954:SF22">
    <property type="entry name" value="D-DOPACHROME DECARBOXYLASE"/>
    <property type="match status" value="1"/>
</dbReference>
<dbReference type="Pfam" id="PF01187">
    <property type="entry name" value="MIF"/>
    <property type="match status" value="1"/>
</dbReference>
<dbReference type="SUPFAM" id="SSF55331">
    <property type="entry name" value="Tautomerase/MIF"/>
    <property type="match status" value="1"/>
</dbReference>
<evidence type="ECO:0000250" key="1"/>
<evidence type="ECO:0000305" key="2"/>